<organism>
    <name type="scientific">Acanthamoeba polyphaga mimivirus</name>
    <name type="common">APMV</name>
    <dbReference type="NCBI Taxonomy" id="212035"/>
    <lineage>
        <taxon>Viruses</taxon>
        <taxon>Varidnaviria</taxon>
        <taxon>Bamfordvirae</taxon>
        <taxon>Nucleocytoviricota</taxon>
        <taxon>Megaviricetes</taxon>
        <taxon>Imitervirales</taxon>
        <taxon>Mimiviridae</taxon>
        <taxon>Megamimivirinae</taxon>
        <taxon>Mimivirus</taxon>
        <taxon>Mimivirus bradfordmassiliense</taxon>
    </lineage>
</organism>
<sequence length="227" mass="26145">MYDKLPLELWVKITNYSQEFGLLLTNKNFFELLYLMKFETNIIEYVVENNLLDILRHIIFLKNINHPIIMENIIDIRCLEESLNASCKNGKLEIVKLLVDLGANIFHNENCAMMLASEYGHIEIVEYLVSKGSDVRADNDYAVIYASKNGHLEIVKYLVSQGCDVRSCDSYAVRLASEYGHLEIVKFLVKKGANYRALNHHAVIEASKNKHYEIVEFLMNYSTGITK</sequence>
<organismHost>
    <name type="scientific">Acanthamoeba polyphaga</name>
    <name type="common">Amoeba</name>
    <dbReference type="NCBI Taxonomy" id="5757"/>
</organismHost>
<dbReference type="EMBL" id="AY653733">
    <property type="protein sequence ID" value="AAV50320.1"/>
    <property type="molecule type" value="Genomic_DNA"/>
</dbReference>
<dbReference type="SMR" id="Q5UPB6"/>
<dbReference type="KEGG" id="vg:9924631"/>
<dbReference type="OrthoDB" id="796at549779"/>
<dbReference type="Proteomes" id="UP000001134">
    <property type="component" value="Genome"/>
</dbReference>
<dbReference type="Gene3D" id="1.25.40.20">
    <property type="entry name" value="Ankyrin repeat-containing domain"/>
    <property type="match status" value="2"/>
</dbReference>
<dbReference type="InterPro" id="IPR002110">
    <property type="entry name" value="Ankyrin_rpt"/>
</dbReference>
<dbReference type="InterPro" id="IPR036770">
    <property type="entry name" value="Ankyrin_rpt-contain_sf"/>
</dbReference>
<dbReference type="PANTHER" id="PTHR44207:SF2">
    <property type="entry name" value="REPEAT PROTEIN, PUTATIVE-RELATED"/>
    <property type="match status" value="1"/>
</dbReference>
<dbReference type="PANTHER" id="PTHR44207">
    <property type="entry name" value="SURFACE ANTIGEN BSPA-LIKE-RELATED"/>
    <property type="match status" value="1"/>
</dbReference>
<dbReference type="Pfam" id="PF12796">
    <property type="entry name" value="Ank_2"/>
    <property type="match status" value="2"/>
</dbReference>
<dbReference type="SMART" id="SM00248">
    <property type="entry name" value="ANK"/>
    <property type="match status" value="5"/>
</dbReference>
<dbReference type="SUPFAM" id="SSF48403">
    <property type="entry name" value="Ankyrin repeat"/>
    <property type="match status" value="1"/>
</dbReference>
<dbReference type="PROSITE" id="PS50297">
    <property type="entry name" value="ANK_REP_REGION"/>
    <property type="match status" value="1"/>
</dbReference>
<dbReference type="PROSITE" id="PS50088">
    <property type="entry name" value="ANK_REPEAT"/>
    <property type="match status" value="3"/>
</dbReference>
<accession>Q5UPB6</accession>
<proteinExistence type="predicted"/>
<keyword id="KW-0040">ANK repeat</keyword>
<keyword id="KW-1185">Reference proteome</keyword>
<keyword id="KW-0677">Repeat</keyword>
<protein>
    <recommendedName>
        <fullName>Putative ankyrin repeat protein L45</fullName>
    </recommendedName>
</protein>
<gene>
    <name type="ordered locus">MIMI_L45</name>
</gene>
<feature type="chain" id="PRO_0000067140" description="Putative ankyrin repeat protein L45">
    <location>
        <begin position="1"/>
        <end position="227"/>
    </location>
</feature>
<feature type="repeat" description="ANK 1">
    <location>
        <begin position="38"/>
        <end position="66"/>
    </location>
</feature>
<feature type="repeat" description="ANK 2">
    <location>
        <begin position="78"/>
        <end position="107"/>
    </location>
</feature>
<feature type="repeat" description="ANK 3">
    <location>
        <begin position="108"/>
        <end position="137"/>
    </location>
</feature>
<feature type="repeat" description="ANK 4">
    <location>
        <begin position="139"/>
        <end position="167"/>
    </location>
</feature>
<feature type="repeat" description="ANK 5">
    <location>
        <begin position="168"/>
        <end position="197"/>
    </location>
</feature>
<feature type="repeat" description="ANK 6">
    <location>
        <begin position="199"/>
        <end position="227"/>
    </location>
</feature>
<name>YL045_MIMIV</name>
<reference key="1">
    <citation type="journal article" date="2004" name="Science">
        <title>The 1.2-megabase genome sequence of Mimivirus.</title>
        <authorList>
            <person name="Raoult D."/>
            <person name="Audic S."/>
            <person name="Robert C."/>
            <person name="Abergel C."/>
            <person name="Renesto P."/>
            <person name="Ogata H."/>
            <person name="La Scola B."/>
            <person name="Susan M."/>
            <person name="Claverie J.-M."/>
        </authorList>
    </citation>
    <scope>NUCLEOTIDE SEQUENCE [LARGE SCALE GENOMIC DNA]</scope>
    <source>
        <strain>Rowbotham-Bradford</strain>
    </source>
</reference>